<protein>
    <recommendedName>
        <fullName>DNA-entry nuclease</fullName>
    </recommendedName>
    <alternativeName>
        <fullName>Competence-specific nuclease</fullName>
        <ecNumber>3.1.30.-</ecNumber>
    </alternativeName>
</protein>
<keyword id="KW-0002">3D-structure</keyword>
<keyword id="KW-1003">Cell membrane</keyword>
<keyword id="KW-0178">Competence</keyword>
<keyword id="KW-0255">Endonuclease</keyword>
<keyword id="KW-0378">Hydrolase</keyword>
<keyword id="KW-0472">Membrane</keyword>
<keyword id="KW-0479">Metal-binding</keyword>
<keyword id="KW-0540">Nuclease</keyword>
<keyword id="KW-1185">Reference proteome</keyword>
<keyword id="KW-0735">Signal-anchor</keyword>
<keyword id="KW-0812">Transmembrane</keyword>
<keyword id="KW-1133">Transmembrane helix</keyword>
<feature type="chain" id="PRO_0000178667" description="DNA-entry nuclease">
    <location>
        <begin position="1"/>
        <end position="274"/>
    </location>
</feature>
<feature type="transmembrane region" description="Helical; Signal-anchor" evidence="2">
    <location>
        <begin position="8"/>
        <end position="25"/>
    </location>
</feature>
<feature type="region of interest" description="Disordered" evidence="4">
    <location>
        <begin position="29"/>
        <end position="51"/>
    </location>
</feature>
<feature type="compositionally biased region" description="Polar residues" evidence="4">
    <location>
        <begin position="30"/>
        <end position="49"/>
    </location>
</feature>
<feature type="active site" description="Proton acceptor" evidence="3">
    <location>
        <position position="160"/>
    </location>
</feature>
<feature type="helix" evidence="6">
    <location>
        <begin position="51"/>
        <end position="55"/>
    </location>
</feature>
<feature type="helix" evidence="6">
    <location>
        <begin position="60"/>
        <end position="63"/>
    </location>
</feature>
<feature type="strand" evidence="6">
    <location>
        <begin position="70"/>
        <end position="72"/>
    </location>
</feature>
<feature type="strand" evidence="6">
    <location>
        <begin position="74"/>
        <end position="76"/>
    </location>
</feature>
<feature type="strand" evidence="6">
    <location>
        <begin position="78"/>
        <end position="80"/>
    </location>
</feature>
<feature type="helix" evidence="6">
    <location>
        <begin position="81"/>
        <end position="83"/>
    </location>
</feature>
<feature type="strand" evidence="6">
    <location>
        <begin position="96"/>
        <end position="104"/>
    </location>
</feature>
<feature type="strand" evidence="6">
    <location>
        <begin position="107"/>
        <end position="117"/>
    </location>
</feature>
<feature type="helix" evidence="6">
    <location>
        <begin position="119"/>
        <end position="121"/>
    </location>
</feature>
<feature type="strand" evidence="6">
    <location>
        <begin position="149"/>
        <end position="151"/>
    </location>
</feature>
<feature type="strand" evidence="6">
    <location>
        <begin position="153"/>
        <end position="162"/>
    </location>
</feature>
<feature type="helix" evidence="6">
    <location>
        <begin position="164"/>
        <end position="167"/>
    </location>
</feature>
<feature type="turn" evidence="6">
    <location>
        <begin position="180"/>
        <end position="182"/>
    </location>
</feature>
<feature type="strand" evidence="6">
    <location>
        <begin position="183"/>
        <end position="187"/>
    </location>
</feature>
<feature type="helix" evidence="6">
    <location>
        <begin position="188"/>
        <end position="192"/>
    </location>
</feature>
<feature type="helix" evidence="6">
    <location>
        <begin position="201"/>
        <end position="213"/>
    </location>
</feature>
<feature type="strand" evidence="6">
    <location>
        <begin position="218"/>
        <end position="225"/>
    </location>
</feature>
<feature type="strand" evidence="6">
    <location>
        <begin position="235"/>
        <end position="243"/>
    </location>
</feature>
<feature type="strand" evidence="6">
    <location>
        <begin position="249"/>
        <end position="256"/>
    </location>
</feature>
<feature type="strand" evidence="6">
    <location>
        <begin position="261"/>
        <end position="263"/>
    </location>
</feature>
<feature type="turn" evidence="6">
    <location>
        <begin position="265"/>
        <end position="267"/>
    </location>
</feature>
<feature type="strand" evidence="6">
    <location>
        <begin position="270"/>
        <end position="272"/>
    </location>
</feature>
<accession>P0A3S3</accession>
<accession>Q03158</accession>
<dbReference type="EC" id="3.1.30.-"/>
<dbReference type="EMBL" id="X54225">
    <property type="protein sequence ID" value="CAA38134.1"/>
    <property type="molecule type" value="Genomic_DNA"/>
</dbReference>
<dbReference type="EMBL" id="AE005672">
    <property type="protein sequence ID" value="AAK76031.1"/>
    <property type="molecule type" value="Genomic_DNA"/>
</dbReference>
<dbReference type="PIR" id="F95229">
    <property type="entry name" value="F95229"/>
</dbReference>
<dbReference type="PIR" id="S10641">
    <property type="entry name" value="S10641"/>
</dbReference>
<dbReference type="RefSeq" id="WP_001036779.1">
    <property type="nucleotide sequence ID" value="NZ_CP155539.1"/>
</dbReference>
<dbReference type="PDB" id="3OWV">
    <property type="method" value="X-ray"/>
    <property type="resolution" value="1.75 A"/>
    <property type="chains" value="A/B=31-274"/>
</dbReference>
<dbReference type="PDBsum" id="3OWV"/>
<dbReference type="SMR" id="P0A3S3"/>
<dbReference type="PaxDb" id="170187-SP_1964"/>
<dbReference type="EnsemblBacteria" id="AAK76031">
    <property type="protein sequence ID" value="AAK76031"/>
    <property type="gene ID" value="SP_1964"/>
</dbReference>
<dbReference type="KEGG" id="spn:SP_1964"/>
<dbReference type="eggNOG" id="ENOG5033PER">
    <property type="taxonomic scope" value="Bacteria"/>
</dbReference>
<dbReference type="PhylomeDB" id="P0A3S3"/>
<dbReference type="BioCyc" id="SPNE170187:G1FZB-2018-MONOMER"/>
<dbReference type="EvolutionaryTrace" id="P0A3S3"/>
<dbReference type="PHI-base" id="PHI:3705"/>
<dbReference type="Proteomes" id="UP000000585">
    <property type="component" value="Chromosome"/>
</dbReference>
<dbReference type="GO" id="GO:0005886">
    <property type="term" value="C:plasma membrane"/>
    <property type="evidence" value="ECO:0007669"/>
    <property type="project" value="UniProtKB-SubCell"/>
</dbReference>
<dbReference type="GO" id="GO:0004519">
    <property type="term" value="F:endonuclease activity"/>
    <property type="evidence" value="ECO:0007669"/>
    <property type="project" value="UniProtKB-KW"/>
</dbReference>
<dbReference type="GO" id="GO:0046872">
    <property type="term" value="F:metal ion binding"/>
    <property type="evidence" value="ECO:0007669"/>
    <property type="project" value="UniProtKB-KW"/>
</dbReference>
<dbReference type="GO" id="GO:0003676">
    <property type="term" value="F:nucleic acid binding"/>
    <property type="evidence" value="ECO:0007669"/>
    <property type="project" value="InterPro"/>
</dbReference>
<dbReference type="GO" id="GO:0030420">
    <property type="term" value="P:establishment of competence for transformation"/>
    <property type="evidence" value="ECO:0007669"/>
    <property type="project" value="UniProtKB-KW"/>
</dbReference>
<dbReference type="Gene3D" id="3.40.570.10">
    <property type="entry name" value="Extracellular Endonuclease, subunit A"/>
    <property type="match status" value="1"/>
</dbReference>
<dbReference type="InterPro" id="IPR018524">
    <property type="entry name" value="DNA/RNA_endonuclease_AS"/>
</dbReference>
<dbReference type="InterPro" id="IPR044929">
    <property type="entry name" value="DNA/RNA_non-sp_Endonuclease_sf"/>
</dbReference>
<dbReference type="InterPro" id="IPR001604">
    <property type="entry name" value="Endo_G_ENPP1-like_dom"/>
</dbReference>
<dbReference type="Pfam" id="PF01223">
    <property type="entry name" value="Endonuclease_NS"/>
    <property type="match status" value="1"/>
</dbReference>
<dbReference type="SMART" id="SM00892">
    <property type="entry name" value="Endonuclease_NS"/>
    <property type="match status" value="1"/>
</dbReference>
<dbReference type="PROSITE" id="PS01070">
    <property type="entry name" value="NUCLEASE_NON_SPEC"/>
    <property type="match status" value="1"/>
</dbReference>
<name>NUCE_STRPN</name>
<comment type="function">
    <text>By degrading DNA that enters the cell, plays a role in the competence of cells to be transformed.</text>
</comment>
<comment type="cofactor">
    <cofactor evidence="1">
        <name>a divalent metal cation</name>
        <dbReference type="ChEBI" id="CHEBI:60240"/>
    </cofactor>
</comment>
<comment type="subcellular location">
    <subcellularLocation>
        <location>Cell membrane</location>
        <topology>Single-pass membrane protein</topology>
    </subcellularLocation>
</comment>
<comment type="miscellaneous">
    <text evidence="1">The active site contains 1 hydrated divalent metal cation that has only 1 direct interaction with the protein; all other interactions are via water molecules.</text>
</comment>
<comment type="similarity">
    <text evidence="5">Belongs to the DNA/RNA non-specific endonuclease family.</text>
</comment>
<evidence type="ECO:0000250" key="1"/>
<evidence type="ECO:0000255" key="2"/>
<evidence type="ECO:0000255" key="3">
    <source>
        <dbReference type="PROSITE-ProRule" id="PRU10047"/>
    </source>
</evidence>
<evidence type="ECO:0000256" key="4">
    <source>
        <dbReference type="SAM" id="MobiDB-lite"/>
    </source>
</evidence>
<evidence type="ECO:0000305" key="5"/>
<evidence type="ECO:0007829" key="6">
    <source>
        <dbReference type="PDB" id="3OWV"/>
    </source>
</evidence>
<organism>
    <name type="scientific">Streptococcus pneumoniae serotype 4 (strain ATCC BAA-334 / TIGR4)</name>
    <dbReference type="NCBI Taxonomy" id="170187"/>
    <lineage>
        <taxon>Bacteria</taxon>
        <taxon>Bacillati</taxon>
        <taxon>Bacillota</taxon>
        <taxon>Bacilli</taxon>
        <taxon>Lactobacillales</taxon>
        <taxon>Streptococcaceae</taxon>
        <taxon>Streptococcus</taxon>
    </lineage>
</organism>
<sequence>MNKKTRQTLIGLLVLLLLSTGSYYIKQMPSAPNSPKTNLSQKKQASEAPSQALAESVLTDAVKSQIKGSLEWNGSGAFIVNGNKTNLDAKVSSKPYADNKTKTVGKETVPTVANALLSKATRQYKNRKETGNGSTSWTPPGWHQVKNLKGSYTHAVDRGHLLGYALIGGLDGFDASTSNPKNIAVQTAWANQAQAEYSTGQNYYESKVRKALDQNKRVRYRVTLYYASNEDLVPSASQIEAKSSDGELEFNVLVPNVQKGLQLDYRTGEVTVTQ</sequence>
<proteinExistence type="evidence at protein level"/>
<reference key="1">
    <citation type="journal article" date="1990" name="J. Mol. Biol.">
        <title>Genetic and structural characterization of endA. A membrane-bound nuclease required for transformation of Streptococcus pneumoniae.</title>
        <authorList>
            <person name="Puyet A."/>
            <person name="Greenberg B."/>
            <person name="Lacks S.A."/>
        </authorList>
    </citation>
    <scope>NUCLEOTIDE SEQUENCE [GENOMIC DNA]</scope>
    <source>
        <strain>470</strain>
    </source>
</reference>
<reference key="2">
    <citation type="journal article" date="2001" name="Science">
        <title>Complete genome sequence of a virulent isolate of Streptococcus pneumoniae.</title>
        <authorList>
            <person name="Tettelin H."/>
            <person name="Nelson K.E."/>
            <person name="Paulsen I.T."/>
            <person name="Eisen J.A."/>
            <person name="Read T.D."/>
            <person name="Peterson S.N."/>
            <person name="Heidelberg J.F."/>
            <person name="DeBoy R.T."/>
            <person name="Haft D.H."/>
            <person name="Dodson R.J."/>
            <person name="Durkin A.S."/>
            <person name="Gwinn M.L."/>
            <person name="Kolonay J.F."/>
            <person name="Nelson W.C."/>
            <person name="Peterson J.D."/>
            <person name="Umayam L.A."/>
            <person name="White O."/>
            <person name="Salzberg S.L."/>
            <person name="Lewis M.R."/>
            <person name="Radune D."/>
            <person name="Holtzapple E.K."/>
            <person name="Khouri H.M."/>
            <person name="Wolf A.M."/>
            <person name="Utterback T.R."/>
            <person name="Hansen C.L."/>
            <person name="McDonald L.A."/>
            <person name="Feldblyum T.V."/>
            <person name="Angiuoli S.V."/>
            <person name="Dickinson T."/>
            <person name="Hickey E.K."/>
            <person name="Holt I.E."/>
            <person name="Loftus B.J."/>
            <person name="Yang F."/>
            <person name="Smith H.O."/>
            <person name="Venter J.C."/>
            <person name="Dougherty B.A."/>
            <person name="Morrison D.A."/>
            <person name="Hollingshead S.K."/>
            <person name="Fraser C.M."/>
        </authorList>
    </citation>
    <scope>NUCLEOTIDE SEQUENCE [LARGE SCALE GENOMIC DNA]</scope>
    <source>
        <strain>ATCC BAA-334 / TIGR4</strain>
    </source>
</reference>
<gene>
    <name type="primary">endA</name>
    <name type="ordered locus">SP_1964</name>
</gene>